<sequence>MAAEPTIDALGQFRLHHGLGPIGGLVNFTQSNEIMVLGTAIVLGIIALGMRQRAVVPGRLQSLVEISYNFIMGLCIEQIGHEGKKFFPFIFTLFFFVLMGNLLGLFPYFFTYTSHVAVTGGLAVLVIVLVTAVALRYHGLHFFSYFFPPGAPKALAPIIVPIEIISYLSRPVSLSIRLFANMVAGHVMFEVFATFMFLLIGALGTFGYFAALLPMTLNVTLVGFELLVAFLQAYVFAILTCIYLHDAVHLH</sequence>
<organism>
    <name type="scientific">Granulibacter bethesdensis (strain ATCC BAA-1260 / CGDNIH1)</name>
    <dbReference type="NCBI Taxonomy" id="391165"/>
    <lineage>
        <taxon>Bacteria</taxon>
        <taxon>Pseudomonadati</taxon>
        <taxon>Pseudomonadota</taxon>
        <taxon>Alphaproteobacteria</taxon>
        <taxon>Acetobacterales</taxon>
        <taxon>Acetobacteraceae</taxon>
        <taxon>Granulibacter</taxon>
    </lineage>
</organism>
<gene>
    <name evidence="1" type="primary">atpB</name>
    <name type="ordered locus">GbCGDNIH1_1867</name>
</gene>
<reference key="1">
    <citation type="journal article" date="2007" name="J. Bacteriol.">
        <title>Genome sequence analysis of the emerging human pathogenic acetic acid bacterium Granulibacter bethesdensis.</title>
        <authorList>
            <person name="Greenberg D.E."/>
            <person name="Porcella S.F."/>
            <person name="Zelazny A.M."/>
            <person name="Virtaneva K."/>
            <person name="Sturdevant D.E."/>
            <person name="Kupko J.J. III"/>
            <person name="Barbian K.D."/>
            <person name="Babar A."/>
            <person name="Dorward D.W."/>
            <person name="Holland S.M."/>
        </authorList>
    </citation>
    <scope>NUCLEOTIDE SEQUENCE [LARGE SCALE GENOMIC DNA]</scope>
    <source>
        <strain>ATCC BAA-1260 / CGDNIH1</strain>
    </source>
</reference>
<dbReference type="EMBL" id="CP000394">
    <property type="protein sequence ID" value="ABI62765.1"/>
    <property type="molecule type" value="Genomic_DNA"/>
</dbReference>
<dbReference type="RefSeq" id="WP_011632567.1">
    <property type="nucleotide sequence ID" value="NC_008343.2"/>
</dbReference>
<dbReference type="SMR" id="Q0BQY7"/>
<dbReference type="STRING" id="391165.GbCGDNIH1_1867"/>
<dbReference type="KEGG" id="gbe:GbCGDNIH1_1867"/>
<dbReference type="eggNOG" id="COG0356">
    <property type="taxonomic scope" value="Bacteria"/>
</dbReference>
<dbReference type="HOGENOM" id="CLU_041018_0_2_5"/>
<dbReference type="OrthoDB" id="9809130at2"/>
<dbReference type="Proteomes" id="UP000001963">
    <property type="component" value="Chromosome"/>
</dbReference>
<dbReference type="GO" id="GO:0005886">
    <property type="term" value="C:plasma membrane"/>
    <property type="evidence" value="ECO:0007669"/>
    <property type="project" value="UniProtKB-SubCell"/>
</dbReference>
<dbReference type="GO" id="GO:0045259">
    <property type="term" value="C:proton-transporting ATP synthase complex"/>
    <property type="evidence" value="ECO:0007669"/>
    <property type="project" value="UniProtKB-KW"/>
</dbReference>
<dbReference type="GO" id="GO:0046933">
    <property type="term" value="F:proton-transporting ATP synthase activity, rotational mechanism"/>
    <property type="evidence" value="ECO:0007669"/>
    <property type="project" value="UniProtKB-UniRule"/>
</dbReference>
<dbReference type="CDD" id="cd00310">
    <property type="entry name" value="ATP-synt_Fo_a_6"/>
    <property type="match status" value="1"/>
</dbReference>
<dbReference type="Gene3D" id="1.20.120.220">
    <property type="entry name" value="ATP synthase, F0 complex, subunit A"/>
    <property type="match status" value="1"/>
</dbReference>
<dbReference type="HAMAP" id="MF_01393">
    <property type="entry name" value="ATP_synth_a_bact"/>
    <property type="match status" value="1"/>
</dbReference>
<dbReference type="InterPro" id="IPR000568">
    <property type="entry name" value="ATP_synth_F0_asu"/>
</dbReference>
<dbReference type="InterPro" id="IPR023011">
    <property type="entry name" value="ATP_synth_F0_asu_AS"/>
</dbReference>
<dbReference type="InterPro" id="IPR045083">
    <property type="entry name" value="ATP_synth_F0_asu_bact/mt"/>
</dbReference>
<dbReference type="InterPro" id="IPR035908">
    <property type="entry name" value="F0_ATP_A_sf"/>
</dbReference>
<dbReference type="NCBIfam" id="TIGR01131">
    <property type="entry name" value="ATP_synt_6_or_A"/>
    <property type="match status" value="1"/>
</dbReference>
<dbReference type="NCBIfam" id="NF004482">
    <property type="entry name" value="PRK05815.2-4"/>
    <property type="match status" value="1"/>
</dbReference>
<dbReference type="PANTHER" id="PTHR11410">
    <property type="entry name" value="ATP SYNTHASE SUBUNIT A"/>
    <property type="match status" value="1"/>
</dbReference>
<dbReference type="PANTHER" id="PTHR11410:SF0">
    <property type="entry name" value="ATP SYNTHASE SUBUNIT A"/>
    <property type="match status" value="1"/>
</dbReference>
<dbReference type="Pfam" id="PF00119">
    <property type="entry name" value="ATP-synt_A"/>
    <property type="match status" value="1"/>
</dbReference>
<dbReference type="PRINTS" id="PR00123">
    <property type="entry name" value="ATPASEA"/>
</dbReference>
<dbReference type="SUPFAM" id="SSF81336">
    <property type="entry name" value="F1F0 ATP synthase subunit A"/>
    <property type="match status" value="1"/>
</dbReference>
<dbReference type="PROSITE" id="PS00449">
    <property type="entry name" value="ATPASE_A"/>
    <property type="match status" value="1"/>
</dbReference>
<evidence type="ECO:0000255" key="1">
    <source>
        <dbReference type="HAMAP-Rule" id="MF_01393"/>
    </source>
</evidence>
<proteinExistence type="inferred from homology"/>
<feature type="chain" id="PRO_0000362318" description="ATP synthase subunit a">
    <location>
        <begin position="1"/>
        <end position="251"/>
    </location>
</feature>
<feature type="transmembrane region" description="Helical" evidence="1">
    <location>
        <begin position="28"/>
        <end position="48"/>
    </location>
</feature>
<feature type="transmembrane region" description="Helical" evidence="1">
    <location>
        <begin position="63"/>
        <end position="80"/>
    </location>
</feature>
<feature type="transmembrane region" description="Helical" evidence="1">
    <location>
        <begin position="86"/>
        <end position="106"/>
    </location>
</feature>
<feature type="transmembrane region" description="Helical" evidence="1">
    <location>
        <begin position="115"/>
        <end position="135"/>
    </location>
</feature>
<feature type="transmembrane region" description="Helical" evidence="1">
    <location>
        <begin position="154"/>
        <end position="176"/>
    </location>
</feature>
<feature type="transmembrane region" description="Helical" evidence="1">
    <location>
        <begin position="195"/>
        <end position="215"/>
    </location>
</feature>
<feature type="transmembrane region" description="Helical" evidence="1">
    <location>
        <begin position="219"/>
        <end position="239"/>
    </location>
</feature>
<comment type="function">
    <text evidence="1">Key component of the proton channel; it plays a direct role in the translocation of protons across the membrane.</text>
</comment>
<comment type="subunit">
    <text evidence="1">F-type ATPases have 2 components, CF(1) - the catalytic core - and CF(0) - the membrane proton channel. CF(1) has five subunits: alpha(3), beta(3), gamma(1), delta(1), epsilon(1). CF(0) has three main subunits: a(1), b(2) and c(9-12). The alpha and beta chains form an alternating ring which encloses part of the gamma chain. CF(1) is attached to CF(0) by a central stalk formed by the gamma and epsilon chains, while a peripheral stalk is formed by the delta and b chains.</text>
</comment>
<comment type="subcellular location">
    <subcellularLocation>
        <location evidence="1">Cell inner membrane</location>
        <topology evidence="1">Multi-pass membrane protein</topology>
    </subcellularLocation>
</comment>
<comment type="similarity">
    <text evidence="1">Belongs to the ATPase A chain family.</text>
</comment>
<keyword id="KW-0066">ATP synthesis</keyword>
<keyword id="KW-0997">Cell inner membrane</keyword>
<keyword id="KW-1003">Cell membrane</keyword>
<keyword id="KW-0138">CF(0)</keyword>
<keyword id="KW-0375">Hydrogen ion transport</keyword>
<keyword id="KW-0406">Ion transport</keyword>
<keyword id="KW-0472">Membrane</keyword>
<keyword id="KW-1185">Reference proteome</keyword>
<keyword id="KW-0812">Transmembrane</keyword>
<keyword id="KW-1133">Transmembrane helix</keyword>
<keyword id="KW-0813">Transport</keyword>
<name>ATP6_GRABC</name>
<accession>Q0BQY7</accession>
<protein>
    <recommendedName>
        <fullName evidence="1">ATP synthase subunit a</fullName>
    </recommendedName>
    <alternativeName>
        <fullName evidence="1">ATP synthase F0 sector subunit a</fullName>
    </alternativeName>
    <alternativeName>
        <fullName evidence="1">F-ATPase subunit 6</fullName>
    </alternativeName>
</protein>